<name>ASPA_ACAM1</name>
<protein>
    <recommendedName>
        <fullName evidence="1">Probable aspartoacylase</fullName>
        <ecNumber evidence="1">3.5.1.15</ecNumber>
    </recommendedName>
</protein>
<gene>
    <name type="ordered locus">AM1_5959</name>
</gene>
<organism>
    <name type="scientific">Acaryochloris marina (strain MBIC 11017)</name>
    <dbReference type="NCBI Taxonomy" id="329726"/>
    <lineage>
        <taxon>Bacteria</taxon>
        <taxon>Bacillati</taxon>
        <taxon>Cyanobacteriota</taxon>
        <taxon>Cyanophyceae</taxon>
        <taxon>Acaryochloridales</taxon>
        <taxon>Acaryochloridaceae</taxon>
        <taxon>Acaryochloris</taxon>
    </lineage>
</organism>
<accession>B0C2K7</accession>
<feature type="chain" id="PRO_1000147936" description="Probable aspartoacylase">
    <location>
        <begin position="1"/>
        <end position="295"/>
    </location>
</feature>
<feature type="binding site" evidence="1">
    <location>
        <position position="16"/>
    </location>
    <ligand>
        <name>Zn(2+)</name>
        <dbReference type="ChEBI" id="CHEBI:29105"/>
    </ligand>
</feature>
<feature type="binding site" evidence="1">
    <location>
        <position position="19"/>
    </location>
    <ligand>
        <name>Zn(2+)</name>
        <dbReference type="ChEBI" id="CHEBI:29105"/>
    </ligand>
</feature>
<feature type="binding site" evidence="1">
    <location>
        <position position="58"/>
    </location>
    <ligand>
        <name>substrate</name>
    </ligand>
</feature>
<feature type="binding site" evidence="1">
    <location>
        <begin position="65"/>
        <end position="66"/>
    </location>
    <ligand>
        <name>substrate</name>
    </ligand>
</feature>
<feature type="binding site" evidence="1">
    <location>
        <position position="107"/>
    </location>
    <ligand>
        <name>Zn(2+)</name>
        <dbReference type="ChEBI" id="CHEBI:29105"/>
    </ligand>
</feature>
<feature type="binding site" evidence="1">
    <location>
        <position position="166"/>
    </location>
    <ligand>
        <name>substrate</name>
    </ligand>
</feature>
<feature type="binding site" evidence="1">
    <location>
        <position position="277"/>
    </location>
    <ligand>
        <name>substrate</name>
    </ligand>
</feature>
<proteinExistence type="inferred from homology"/>
<sequence>MNTNHIRQVVIVGGTHGNERIGLYLVKKFNQDSSLLFRPNLTTNCLIGNPQACKENQRYIETDLNRCFIKADLDNHLLGRHEEKQAKVLHEQLGPKGNSENFLLDLHSTTANMGLTLILVNDHPFNLHLAAYLTHHNPQVRVYRWTQENQENAFVSSLCQLGFAIEVGPIPQGILLASLFKETETLIHQTLDYLEQVNRGASPPLPKTLTLFQHLEVVDYPKTSNGELAGMIHPQLQGRDYQPLNPGDPIFLTFEDQTLFYEGCSTVWPIFINEAAYYEKGIAMCLTHKQDISLK</sequence>
<comment type="catalytic activity">
    <reaction evidence="1">
        <text>an N-acyl-L-aspartate + H2O = a carboxylate + L-aspartate</text>
        <dbReference type="Rhea" id="RHEA:10872"/>
        <dbReference type="ChEBI" id="CHEBI:15377"/>
        <dbReference type="ChEBI" id="CHEBI:29067"/>
        <dbReference type="ChEBI" id="CHEBI:29991"/>
        <dbReference type="ChEBI" id="CHEBI:58497"/>
        <dbReference type="EC" id="3.5.1.15"/>
    </reaction>
</comment>
<comment type="cofactor">
    <cofactor evidence="1">
        <name>Zn(2+)</name>
        <dbReference type="ChEBI" id="CHEBI:29105"/>
    </cofactor>
    <text evidence="1">Binds 1 zinc ion per subunit.</text>
</comment>
<comment type="similarity">
    <text evidence="1">Belongs to the AspA/AstE family. Aspartoacylase subfamily.</text>
</comment>
<reference key="1">
    <citation type="journal article" date="2008" name="Proc. Natl. Acad. Sci. U.S.A.">
        <title>Niche adaptation and genome expansion in the chlorophyll d-producing cyanobacterium Acaryochloris marina.</title>
        <authorList>
            <person name="Swingley W.D."/>
            <person name="Chen M."/>
            <person name="Cheung P.C."/>
            <person name="Conrad A.L."/>
            <person name="Dejesa L.C."/>
            <person name="Hao J."/>
            <person name="Honchak B.M."/>
            <person name="Karbach L.E."/>
            <person name="Kurdoglu A."/>
            <person name="Lahiri S."/>
            <person name="Mastrian S.D."/>
            <person name="Miyashita H."/>
            <person name="Page L."/>
            <person name="Ramakrishna P."/>
            <person name="Satoh S."/>
            <person name="Sattley W.M."/>
            <person name="Shimada Y."/>
            <person name="Taylor H.L."/>
            <person name="Tomo T."/>
            <person name="Tsuchiya T."/>
            <person name="Wang Z.T."/>
            <person name="Raymond J."/>
            <person name="Mimuro M."/>
            <person name="Blankenship R.E."/>
            <person name="Touchman J.W."/>
        </authorList>
    </citation>
    <scope>NUCLEOTIDE SEQUENCE [LARGE SCALE GENOMIC DNA]</scope>
    <source>
        <strain>MBIC 11017</strain>
    </source>
</reference>
<dbReference type="EC" id="3.5.1.15" evidence="1"/>
<dbReference type="EMBL" id="CP000828">
    <property type="protein sequence ID" value="ABW30895.1"/>
    <property type="molecule type" value="Genomic_DNA"/>
</dbReference>
<dbReference type="RefSeq" id="WP_012166097.1">
    <property type="nucleotide sequence ID" value="NC_009925.1"/>
</dbReference>
<dbReference type="SMR" id="B0C2K7"/>
<dbReference type="STRING" id="329726.AM1_5959"/>
<dbReference type="KEGG" id="amr:AM1_5959"/>
<dbReference type="eggNOG" id="COG2988">
    <property type="taxonomic scope" value="Bacteria"/>
</dbReference>
<dbReference type="HOGENOM" id="CLU_083292_0_0_3"/>
<dbReference type="OrthoDB" id="531770at2"/>
<dbReference type="Proteomes" id="UP000000268">
    <property type="component" value="Chromosome"/>
</dbReference>
<dbReference type="GO" id="GO:0005829">
    <property type="term" value="C:cytosol"/>
    <property type="evidence" value="ECO:0007669"/>
    <property type="project" value="TreeGrafter"/>
</dbReference>
<dbReference type="GO" id="GO:0019807">
    <property type="term" value="F:aspartoacylase activity"/>
    <property type="evidence" value="ECO:0007669"/>
    <property type="project" value="UniProtKB-UniRule"/>
</dbReference>
<dbReference type="GO" id="GO:0016788">
    <property type="term" value="F:hydrolase activity, acting on ester bonds"/>
    <property type="evidence" value="ECO:0007669"/>
    <property type="project" value="InterPro"/>
</dbReference>
<dbReference type="GO" id="GO:0008270">
    <property type="term" value="F:zinc ion binding"/>
    <property type="evidence" value="ECO:0007669"/>
    <property type="project" value="UniProtKB-UniRule"/>
</dbReference>
<dbReference type="CDD" id="cd06909">
    <property type="entry name" value="M14_ASPA"/>
    <property type="match status" value="1"/>
</dbReference>
<dbReference type="Gene3D" id="2.20.25.160">
    <property type="match status" value="1"/>
</dbReference>
<dbReference type="Gene3D" id="3.40.630.10">
    <property type="entry name" value="Zn peptidases"/>
    <property type="match status" value="1"/>
</dbReference>
<dbReference type="HAMAP" id="MF_00704">
    <property type="entry name" value="Aspartoacylase"/>
    <property type="match status" value="1"/>
</dbReference>
<dbReference type="InterPro" id="IPR050178">
    <property type="entry name" value="AspA/AstE_fam"/>
</dbReference>
<dbReference type="InterPro" id="IPR016708">
    <property type="entry name" value="Aspartoacylase"/>
</dbReference>
<dbReference type="InterPro" id="IPR055438">
    <property type="entry name" value="AstE_AspA_cat"/>
</dbReference>
<dbReference type="InterPro" id="IPR007036">
    <property type="entry name" value="Aste_AspA_hybrid_dom"/>
</dbReference>
<dbReference type="NCBIfam" id="NF002601">
    <property type="entry name" value="PRK02259.1"/>
    <property type="match status" value="1"/>
</dbReference>
<dbReference type="PANTHER" id="PTHR15162">
    <property type="entry name" value="ASPARTOACYLASE"/>
    <property type="match status" value="1"/>
</dbReference>
<dbReference type="PANTHER" id="PTHR15162:SF7">
    <property type="entry name" value="SUCCINYLGLUTAMATE DESUCCINYLASE"/>
    <property type="match status" value="1"/>
</dbReference>
<dbReference type="Pfam" id="PF24827">
    <property type="entry name" value="AstE_AspA_cat"/>
    <property type="match status" value="1"/>
</dbReference>
<dbReference type="Pfam" id="PF04952">
    <property type="entry name" value="AstE_AspA_hybrid"/>
    <property type="match status" value="1"/>
</dbReference>
<dbReference type="PIRSF" id="PIRSF018001">
    <property type="entry name" value="Aspartoacylase"/>
    <property type="match status" value="1"/>
</dbReference>
<dbReference type="SUPFAM" id="SSF53187">
    <property type="entry name" value="Zn-dependent exopeptidases"/>
    <property type="match status" value="1"/>
</dbReference>
<keyword id="KW-0378">Hydrolase</keyword>
<keyword id="KW-0479">Metal-binding</keyword>
<keyword id="KW-1185">Reference proteome</keyword>
<keyword id="KW-0862">Zinc</keyword>
<evidence type="ECO:0000255" key="1">
    <source>
        <dbReference type="HAMAP-Rule" id="MF_00704"/>
    </source>
</evidence>